<feature type="chain" id="PRO_0000102806" description="Succinate--CoA ligase [ADP-forming] subunit alpha">
    <location>
        <begin position="1"/>
        <end position="302"/>
    </location>
</feature>
<feature type="active site" description="Tele-phosphohistidine intermediate" evidence="1">
    <location>
        <position position="247"/>
    </location>
</feature>
<feature type="binding site" evidence="1">
    <location>
        <begin position="17"/>
        <end position="20"/>
    </location>
    <ligand>
        <name>CoA</name>
        <dbReference type="ChEBI" id="CHEBI:57287"/>
    </ligand>
</feature>
<feature type="binding site" evidence="1">
    <location>
        <position position="43"/>
    </location>
    <ligand>
        <name>CoA</name>
        <dbReference type="ChEBI" id="CHEBI:57287"/>
    </ligand>
</feature>
<feature type="binding site" evidence="1">
    <location>
        <begin position="96"/>
        <end position="98"/>
    </location>
    <ligand>
        <name>CoA</name>
        <dbReference type="ChEBI" id="CHEBI:57287"/>
    </ligand>
</feature>
<feature type="binding site" evidence="1">
    <location>
        <position position="159"/>
    </location>
    <ligand>
        <name>substrate</name>
        <note>ligand shared with subunit beta</note>
    </ligand>
</feature>
<comment type="function">
    <text evidence="1">Succinyl-CoA synthetase functions in the citric acid cycle (TCA), coupling the hydrolysis of succinyl-CoA to the synthesis of either ATP or GTP and thus represents the only step of substrate-level phosphorylation in the TCA. The alpha subunit of the enzyme binds the substrates coenzyme A and phosphate, while succinate binding and nucleotide specificity is provided by the beta subunit.</text>
</comment>
<comment type="catalytic activity">
    <reaction evidence="1">
        <text>succinate + ATP + CoA = succinyl-CoA + ADP + phosphate</text>
        <dbReference type="Rhea" id="RHEA:17661"/>
        <dbReference type="ChEBI" id="CHEBI:30031"/>
        <dbReference type="ChEBI" id="CHEBI:30616"/>
        <dbReference type="ChEBI" id="CHEBI:43474"/>
        <dbReference type="ChEBI" id="CHEBI:57287"/>
        <dbReference type="ChEBI" id="CHEBI:57292"/>
        <dbReference type="ChEBI" id="CHEBI:456216"/>
        <dbReference type="EC" id="6.2.1.5"/>
    </reaction>
    <physiologicalReaction direction="right-to-left" evidence="1">
        <dbReference type="Rhea" id="RHEA:17663"/>
    </physiologicalReaction>
</comment>
<comment type="catalytic activity">
    <reaction evidence="1">
        <text>GTP + succinate + CoA = succinyl-CoA + GDP + phosphate</text>
        <dbReference type="Rhea" id="RHEA:22120"/>
        <dbReference type="ChEBI" id="CHEBI:30031"/>
        <dbReference type="ChEBI" id="CHEBI:37565"/>
        <dbReference type="ChEBI" id="CHEBI:43474"/>
        <dbReference type="ChEBI" id="CHEBI:57287"/>
        <dbReference type="ChEBI" id="CHEBI:57292"/>
        <dbReference type="ChEBI" id="CHEBI:58189"/>
    </reaction>
    <physiologicalReaction direction="right-to-left" evidence="1">
        <dbReference type="Rhea" id="RHEA:22122"/>
    </physiologicalReaction>
</comment>
<comment type="pathway">
    <text evidence="1">Carbohydrate metabolism; tricarboxylic acid cycle; succinate from succinyl-CoA (ligase route): step 1/1.</text>
</comment>
<comment type="subunit">
    <text evidence="1">Heterotetramer of two alpha and two beta subunits.</text>
</comment>
<comment type="similarity">
    <text evidence="1">Belongs to the succinate/malate CoA ligase alpha subunit family.</text>
</comment>
<accession>Q5HPU4</accession>
<proteinExistence type="inferred from homology"/>
<organism>
    <name type="scientific">Staphylococcus epidermidis (strain ATCC 35984 / DSM 28319 / BCRC 17069 / CCUG 31568 / BM 3577 / RP62A)</name>
    <dbReference type="NCBI Taxonomy" id="176279"/>
    <lineage>
        <taxon>Bacteria</taxon>
        <taxon>Bacillati</taxon>
        <taxon>Bacillota</taxon>
        <taxon>Bacilli</taxon>
        <taxon>Bacillales</taxon>
        <taxon>Staphylococcaceae</taxon>
        <taxon>Staphylococcus</taxon>
    </lineage>
</organism>
<sequence>MSVFIDKNTKVMVQGITGSTALFHTKQMLDYGTQIVAGVTPGKGGQVVEGVPVYNTVEEAKNETGANVSVVYVPAPFAADSIIEAADADLDMVICITEHIPVVDMVKVKRYLQGRKTRLVGPNCPGVITADECKIGIMPGYIHKKGHVGVVSRSGTLTYEAVHQLTEEGIGQTTAVGIGGDPVNGTNFIDVLKAFNEDSETKAVVMIGEIGGTAEEEAAQWIKENMNKPVVGFIGGQTAPPGKRMGHAGAIISGGKGTASEKIKTLNDCGVETADTPSEIGTTLIDAAKKAGIYEELLTIKK</sequence>
<reference key="1">
    <citation type="journal article" date="2005" name="J. Bacteriol.">
        <title>Insights on evolution of virulence and resistance from the complete genome analysis of an early methicillin-resistant Staphylococcus aureus strain and a biofilm-producing methicillin-resistant Staphylococcus epidermidis strain.</title>
        <authorList>
            <person name="Gill S.R."/>
            <person name="Fouts D.E."/>
            <person name="Archer G.L."/>
            <person name="Mongodin E.F."/>
            <person name="DeBoy R.T."/>
            <person name="Ravel J."/>
            <person name="Paulsen I.T."/>
            <person name="Kolonay J.F."/>
            <person name="Brinkac L.M."/>
            <person name="Beanan M.J."/>
            <person name="Dodson R.J."/>
            <person name="Daugherty S.C."/>
            <person name="Madupu R."/>
            <person name="Angiuoli S.V."/>
            <person name="Durkin A.S."/>
            <person name="Haft D.H."/>
            <person name="Vamathevan J.J."/>
            <person name="Khouri H."/>
            <person name="Utterback T.R."/>
            <person name="Lee C."/>
            <person name="Dimitrov G."/>
            <person name="Jiang L."/>
            <person name="Qin H."/>
            <person name="Weidman J."/>
            <person name="Tran K."/>
            <person name="Kang K.H."/>
            <person name="Hance I.R."/>
            <person name="Nelson K.E."/>
            <person name="Fraser C.M."/>
        </authorList>
    </citation>
    <scope>NUCLEOTIDE SEQUENCE [LARGE SCALE GENOMIC DNA]</scope>
    <source>
        <strain>ATCC 35984 / DSM 28319 / BCRC 17069 / CCUG 31568 / BM 3577 / RP62A</strain>
    </source>
</reference>
<dbReference type="EC" id="6.2.1.5" evidence="1"/>
<dbReference type="EMBL" id="CP000029">
    <property type="protein sequence ID" value="AAW54160.1"/>
    <property type="molecule type" value="Genomic_DNA"/>
</dbReference>
<dbReference type="RefSeq" id="WP_002446283.1">
    <property type="nucleotide sequence ID" value="NC_002976.3"/>
</dbReference>
<dbReference type="SMR" id="Q5HPU4"/>
<dbReference type="STRING" id="176279.SERP0814"/>
<dbReference type="GeneID" id="50018940"/>
<dbReference type="KEGG" id="ser:SERP0814"/>
<dbReference type="eggNOG" id="COG0074">
    <property type="taxonomic scope" value="Bacteria"/>
</dbReference>
<dbReference type="HOGENOM" id="CLU_052104_0_0_9"/>
<dbReference type="UniPathway" id="UPA00223">
    <property type="reaction ID" value="UER00999"/>
</dbReference>
<dbReference type="Proteomes" id="UP000000531">
    <property type="component" value="Chromosome"/>
</dbReference>
<dbReference type="GO" id="GO:0005829">
    <property type="term" value="C:cytosol"/>
    <property type="evidence" value="ECO:0007669"/>
    <property type="project" value="TreeGrafter"/>
</dbReference>
<dbReference type="GO" id="GO:0009361">
    <property type="term" value="C:succinate-CoA ligase complex (ADP-forming)"/>
    <property type="evidence" value="ECO:0007669"/>
    <property type="project" value="TreeGrafter"/>
</dbReference>
<dbReference type="GO" id="GO:0000166">
    <property type="term" value="F:nucleotide binding"/>
    <property type="evidence" value="ECO:0007669"/>
    <property type="project" value="UniProtKB-KW"/>
</dbReference>
<dbReference type="GO" id="GO:0004775">
    <property type="term" value="F:succinate-CoA ligase (ADP-forming) activity"/>
    <property type="evidence" value="ECO:0007669"/>
    <property type="project" value="UniProtKB-UniRule"/>
</dbReference>
<dbReference type="GO" id="GO:0004776">
    <property type="term" value="F:succinate-CoA ligase (GDP-forming) activity"/>
    <property type="evidence" value="ECO:0007669"/>
    <property type="project" value="TreeGrafter"/>
</dbReference>
<dbReference type="GO" id="GO:0006099">
    <property type="term" value="P:tricarboxylic acid cycle"/>
    <property type="evidence" value="ECO:0007669"/>
    <property type="project" value="UniProtKB-UniRule"/>
</dbReference>
<dbReference type="FunFam" id="3.40.50.261:FF:000002">
    <property type="entry name" value="Succinate--CoA ligase [ADP-forming] subunit alpha"/>
    <property type="match status" value="1"/>
</dbReference>
<dbReference type="FunFam" id="3.40.50.720:FF:000002">
    <property type="entry name" value="Succinate--CoA ligase [ADP-forming] subunit alpha"/>
    <property type="match status" value="1"/>
</dbReference>
<dbReference type="Gene3D" id="3.40.50.720">
    <property type="entry name" value="NAD(P)-binding Rossmann-like Domain"/>
    <property type="match status" value="1"/>
</dbReference>
<dbReference type="Gene3D" id="3.40.50.261">
    <property type="entry name" value="Succinyl-CoA synthetase domains"/>
    <property type="match status" value="1"/>
</dbReference>
<dbReference type="HAMAP" id="MF_01988">
    <property type="entry name" value="Succ_CoA_alpha"/>
    <property type="match status" value="1"/>
</dbReference>
<dbReference type="InterPro" id="IPR017440">
    <property type="entry name" value="Cit_synth/succinyl-CoA_lig_AS"/>
</dbReference>
<dbReference type="InterPro" id="IPR033847">
    <property type="entry name" value="Citrt_syn/SCS-alpha_CS"/>
</dbReference>
<dbReference type="InterPro" id="IPR003781">
    <property type="entry name" value="CoA-bd"/>
</dbReference>
<dbReference type="InterPro" id="IPR005810">
    <property type="entry name" value="CoA_lig_alpha"/>
</dbReference>
<dbReference type="InterPro" id="IPR036291">
    <property type="entry name" value="NAD(P)-bd_dom_sf"/>
</dbReference>
<dbReference type="InterPro" id="IPR005811">
    <property type="entry name" value="SUCC_ACL_C"/>
</dbReference>
<dbReference type="InterPro" id="IPR016102">
    <property type="entry name" value="Succinyl-CoA_synth-like"/>
</dbReference>
<dbReference type="NCBIfam" id="NF004230">
    <property type="entry name" value="PRK05678.1"/>
    <property type="match status" value="1"/>
</dbReference>
<dbReference type="NCBIfam" id="TIGR01019">
    <property type="entry name" value="sucCoAalpha"/>
    <property type="match status" value="1"/>
</dbReference>
<dbReference type="PANTHER" id="PTHR11117:SF2">
    <property type="entry name" value="SUCCINATE--COA LIGASE [ADP_GDP-FORMING] SUBUNIT ALPHA, MITOCHONDRIAL"/>
    <property type="match status" value="1"/>
</dbReference>
<dbReference type="PANTHER" id="PTHR11117">
    <property type="entry name" value="SUCCINYL-COA LIGASE SUBUNIT ALPHA"/>
    <property type="match status" value="1"/>
</dbReference>
<dbReference type="Pfam" id="PF02629">
    <property type="entry name" value="CoA_binding"/>
    <property type="match status" value="1"/>
</dbReference>
<dbReference type="Pfam" id="PF00549">
    <property type="entry name" value="Ligase_CoA"/>
    <property type="match status" value="1"/>
</dbReference>
<dbReference type="PIRSF" id="PIRSF001553">
    <property type="entry name" value="SucCS_alpha"/>
    <property type="match status" value="1"/>
</dbReference>
<dbReference type="PRINTS" id="PR01798">
    <property type="entry name" value="SCOASYNTHASE"/>
</dbReference>
<dbReference type="SMART" id="SM00881">
    <property type="entry name" value="CoA_binding"/>
    <property type="match status" value="1"/>
</dbReference>
<dbReference type="SUPFAM" id="SSF51735">
    <property type="entry name" value="NAD(P)-binding Rossmann-fold domains"/>
    <property type="match status" value="1"/>
</dbReference>
<dbReference type="SUPFAM" id="SSF52210">
    <property type="entry name" value="Succinyl-CoA synthetase domains"/>
    <property type="match status" value="1"/>
</dbReference>
<dbReference type="PROSITE" id="PS01216">
    <property type="entry name" value="SUCCINYL_COA_LIG_1"/>
    <property type="match status" value="1"/>
</dbReference>
<dbReference type="PROSITE" id="PS00399">
    <property type="entry name" value="SUCCINYL_COA_LIG_2"/>
    <property type="match status" value="1"/>
</dbReference>
<keyword id="KW-0436">Ligase</keyword>
<keyword id="KW-0547">Nucleotide-binding</keyword>
<keyword id="KW-1185">Reference proteome</keyword>
<keyword id="KW-0816">Tricarboxylic acid cycle</keyword>
<evidence type="ECO:0000255" key="1">
    <source>
        <dbReference type="HAMAP-Rule" id="MF_01988"/>
    </source>
</evidence>
<name>SUCD_STAEQ</name>
<protein>
    <recommendedName>
        <fullName evidence="1">Succinate--CoA ligase [ADP-forming] subunit alpha</fullName>
        <ecNumber evidence="1">6.2.1.5</ecNumber>
    </recommendedName>
    <alternativeName>
        <fullName evidence="1">Succinyl-CoA synthetase subunit alpha</fullName>
        <shortName evidence="1">SCS-alpha</shortName>
    </alternativeName>
</protein>
<gene>
    <name evidence="1" type="primary">sucD</name>
    <name type="ordered locus">SERP0814</name>
</gene>